<proteinExistence type="inferred from homology"/>
<dbReference type="EC" id="3.1.26.4" evidence="1"/>
<dbReference type="EMBL" id="BX571857">
    <property type="protein sequence ID" value="CAG42955.1"/>
    <property type="molecule type" value="Genomic_DNA"/>
</dbReference>
<dbReference type="RefSeq" id="WP_000176387.1">
    <property type="nucleotide sequence ID" value="NC_002953.3"/>
</dbReference>
<dbReference type="SMR" id="Q6G9W9"/>
<dbReference type="KEGG" id="sas:SAS1178"/>
<dbReference type="HOGENOM" id="CLU_036532_2_1_9"/>
<dbReference type="GO" id="GO:0005737">
    <property type="term" value="C:cytoplasm"/>
    <property type="evidence" value="ECO:0007669"/>
    <property type="project" value="UniProtKB-SubCell"/>
</dbReference>
<dbReference type="GO" id="GO:0032299">
    <property type="term" value="C:ribonuclease H2 complex"/>
    <property type="evidence" value="ECO:0007669"/>
    <property type="project" value="TreeGrafter"/>
</dbReference>
<dbReference type="GO" id="GO:0030145">
    <property type="term" value="F:manganese ion binding"/>
    <property type="evidence" value="ECO:0007669"/>
    <property type="project" value="UniProtKB-UniRule"/>
</dbReference>
<dbReference type="GO" id="GO:0003723">
    <property type="term" value="F:RNA binding"/>
    <property type="evidence" value="ECO:0007669"/>
    <property type="project" value="InterPro"/>
</dbReference>
<dbReference type="GO" id="GO:0004523">
    <property type="term" value="F:RNA-DNA hybrid ribonuclease activity"/>
    <property type="evidence" value="ECO:0007669"/>
    <property type="project" value="UniProtKB-UniRule"/>
</dbReference>
<dbReference type="GO" id="GO:0043137">
    <property type="term" value="P:DNA replication, removal of RNA primer"/>
    <property type="evidence" value="ECO:0007669"/>
    <property type="project" value="TreeGrafter"/>
</dbReference>
<dbReference type="GO" id="GO:0006298">
    <property type="term" value="P:mismatch repair"/>
    <property type="evidence" value="ECO:0007669"/>
    <property type="project" value="TreeGrafter"/>
</dbReference>
<dbReference type="CDD" id="cd07182">
    <property type="entry name" value="RNase_HII_bacteria_HII_like"/>
    <property type="match status" value="1"/>
</dbReference>
<dbReference type="FunFam" id="3.30.420.10:FF:000006">
    <property type="entry name" value="Ribonuclease HII"/>
    <property type="match status" value="1"/>
</dbReference>
<dbReference type="Gene3D" id="3.30.420.10">
    <property type="entry name" value="Ribonuclease H-like superfamily/Ribonuclease H"/>
    <property type="match status" value="1"/>
</dbReference>
<dbReference type="HAMAP" id="MF_00052_B">
    <property type="entry name" value="RNase_HII_B"/>
    <property type="match status" value="1"/>
</dbReference>
<dbReference type="InterPro" id="IPR022898">
    <property type="entry name" value="RNase_HII"/>
</dbReference>
<dbReference type="InterPro" id="IPR001352">
    <property type="entry name" value="RNase_HII/HIII"/>
</dbReference>
<dbReference type="InterPro" id="IPR024567">
    <property type="entry name" value="RNase_HII/HIII_dom"/>
</dbReference>
<dbReference type="InterPro" id="IPR012337">
    <property type="entry name" value="RNaseH-like_sf"/>
</dbReference>
<dbReference type="InterPro" id="IPR036397">
    <property type="entry name" value="RNaseH_sf"/>
</dbReference>
<dbReference type="NCBIfam" id="NF000594">
    <property type="entry name" value="PRK00015.1-1"/>
    <property type="match status" value="1"/>
</dbReference>
<dbReference type="NCBIfam" id="NF000595">
    <property type="entry name" value="PRK00015.1-3"/>
    <property type="match status" value="1"/>
</dbReference>
<dbReference type="PANTHER" id="PTHR10954">
    <property type="entry name" value="RIBONUCLEASE H2 SUBUNIT A"/>
    <property type="match status" value="1"/>
</dbReference>
<dbReference type="PANTHER" id="PTHR10954:SF18">
    <property type="entry name" value="RIBONUCLEASE HII"/>
    <property type="match status" value="1"/>
</dbReference>
<dbReference type="Pfam" id="PF01351">
    <property type="entry name" value="RNase_HII"/>
    <property type="match status" value="1"/>
</dbReference>
<dbReference type="SUPFAM" id="SSF53098">
    <property type="entry name" value="Ribonuclease H-like"/>
    <property type="match status" value="1"/>
</dbReference>
<dbReference type="PROSITE" id="PS51975">
    <property type="entry name" value="RNASE_H_2"/>
    <property type="match status" value="1"/>
</dbReference>
<evidence type="ECO:0000255" key="1">
    <source>
        <dbReference type="HAMAP-Rule" id="MF_00052"/>
    </source>
</evidence>
<evidence type="ECO:0000255" key="2">
    <source>
        <dbReference type="PROSITE-ProRule" id="PRU01319"/>
    </source>
</evidence>
<name>RNH2_STAAS</name>
<accession>Q6G9W9</accession>
<comment type="function">
    <text evidence="1">Endonuclease that specifically degrades the RNA of RNA-DNA hybrids.</text>
</comment>
<comment type="catalytic activity">
    <reaction evidence="1">
        <text>Endonucleolytic cleavage to 5'-phosphomonoester.</text>
        <dbReference type="EC" id="3.1.26.4"/>
    </reaction>
</comment>
<comment type="cofactor">
    <cofactor evidence="1">
        <name>Mn(2+)</name>
        <dbReference type="ChEBI" id="CHEBI:29035"/>
    </cofactor>
    <cofactor evidence="1">
        <name>Mg(2+)</name>
        <dbReference type="ChEBI" id="CHEBI:18420"/>
    </cofactor>
    <text evidence="1">Manganese or magnesium. Binds 1 divalent metal ion per monomer in the absence of substrate. May bind a second metal ion after substrate binding.</text>
</comment>
<comment type="subcellular location">
    <subcellularLocation>
        <location evidence="1">Cytoplasm</location>
    </subcellularLocation>
</comment>
<comment type="similarity">
    <text evidence="1">Belongs to the RNase HII family.</text>
</comment>
<reference key="1">
    <citation type="journal article" date="2004" name="Proc. Natl. Acad. Sci. U.S.A.">
        <title>Complete genomes of two clinical Staphylococcus aureus strains: evidence for the rapid evolution of virulence and drug resistance.</title>
        <authorList>
            <person name="Holden M.T.G."/>
            <person name="Feil E.J."/>
            <person name="Lindsay J.A."/>
            <person name="Peacock S.J."/>
            <person name="Day N.P.J."/>
            <person name="Enright M.C."/>
            <person name="Foster T.J."/>
            <person name="Moore C.E."/>
            <person name="Hurst L."/>
            <person name="Atkin R."/>
            <person name="Barron A."/>
            <person name="Bason N."/>
            <person name="Bentley S.D."/>
            <person name="Chillingworth C."/>
            <person name="Chillingworth T."/>
            <person name="Churcher C."/>
            <person name="Clark L."/>
            <person name="Corton C."/>
            <person name="Cronin A."/>
            <person name="Doggett J."/>
            <person name="Dowd L."/>
            <person name="Feltwell T."/>
            <person name="Hance Z."/>
            <person name="Harris B."/>
            <person name="Hauser H."/>
            <person name="Holroyd S."/>
            <person name="Jagels K."/>
            <person name="James K.D."/>
            <person name="Lennard N."/>
            <person name="Line A."/>
            <person name="Mayes R."/>
            <person name="Moule S."/>
            <person name="Mungall K."/>
            <person name="Ormond D."/>
            <person name="Quail M.A."/>
            <person name="Rabbinowitsch E."/>
            <person name="Rutherford K.M."/>
            <person name="Sanders M."/>
            <person name="Sharp S."/>
            <person name="Simmonds M."/>
            <person name="Stevens K."/>
            <person name="Whitehead S."/>
            <person name="Barrell B.G."/>
            <person name="Spratt B.G."/>
            <person name="Parkhill J."/>
        </authorList>
    </citation>
    <scope>NUCLEOTIDE SEQUENCE [LARGE SCALE GENOMIC DNA]</scope>
    <source>
        <strain>MSSA476</strain>
    </source>
</reference>
<gene>
    <name evidence="1" type="primary">rnhB</name>
    <name type="ordered locus">SAS1178</name>
</gene>
<organism>
    <name type="scientific">Staphylococcus aureus (strain MSSA476)</name>
    <dbReference type="NCBI Taxonomy" id="282459"/>
    <lineage>
        <taxon>Bacteria</taxon>
        <taxon>Bacillati</taxon>
        <taxon>Bacillota</taxon>
        <taxon>Bacilli</taxon>
        <taxon>Bacillales</taxon>
        <taxon>Staphylococcaceae</taxon>
        <taxon>Staphylococcus</taxon>
    </lineage>
</organism>
<keyword id="KW-0963">Cytoplasm</keyword>
<keyword id="KW-0255">Endonuclease</keyword>
<keyword id="KW-0378">Hydrolase</keyword>
<keyword id="KW-0464">Manganese</keyword>
<keyword id="KW-0479">Metal-binding</keyword>
<keyword id="KW-0540">Nuclease</keyword>
<protein>
    <recommendedName>
        <fullName evidence="1">Ribonuclease HII</fullName>
        <shortName evidence="1">RNase HII</shortName>
        <ecNumber evidence="1">3.1.26.4</ecNumber>
    </recommendedName>
</protein>
<sequence>MTLTIKEVKQLINAVNTIEELENHECFLDERKGVQNAIARRRKALEKEQALKEKYVEMTYFENEILKEHPNAIICGIDEVGRGPLAGPVVACATILNSNHNYLGLDDSKKVPVTKRLELNEALKNEVTAFAYGIATAEEIDEFNIYKATQIAMQRAIDGLSVQPTHLLIDAMTLDNALPQVSLIKGDARSVSIAAASIMAKVFRDDYMTQLSKDYPEYGFEKNAGYGTKQHLLAIDDIGIMKEHRKSFEPIKSLL</sequence>
<feature type="chain" id="PRO_0000111625" description="Ribonuclease HII">
    <location>
        <begin position="1"/>
        <end position="255"/>
    </location>
</feature>
<feature type="domain" description="RNase H type-2" evidence="2">
    <location>
        <begin position="72"/>
        <end position="255"/>
    </location>
</feature>
<feature type="binding site" evidence="1">
    <location>
        <position position="78"/>
    </location>
    <ligand>
        <name>a divalent metal cation</name>
        <dbReference type="ChEBI" id="CHEBI:60240"/>
    </ligand>
</feature>
<feature type="binding site" evidence="1">
    <location>
        <position position="79"/>
    </location>
    <ligand>
        <name>a divalent metal cation</name>
        <dbReference type="ChEBI" id="CHEBI:60240"/>
    </ligand>
</feature>
<feature type="binding site" evidence="1">
    <location>
        <position position="170"/>
    </location>
    <ligand>
        <name>a divalent metal cation</name>
        <dbReference type="ChEBI" id="CHEBI:60240"/>
    </ligand>
</feature>